<dbReference type="EC" id="5.1.1.7" evidence="1"/>
<dbReference type="EMBL" id="CP001161">
    <property type="protein sequence ID" value="ACL30927.1"/>
    <property type="molecule type" value="Genomic_DNA"/>
</dbReference>
<dbReference type="SMR" id="B8D8F1"/>
<dbReference type="KEGG" id="bap:BUAP5A_582"/>
<dbReference type="HOGENOM" id="CLU_053306_1_1_6"/>
<dbReference type="OrthoDB" id="9805408at2"/>
<dbReference type="UniPathway" id="UPA00034">
    <property type="reaction ID" value="UER00025"/>
</dbReference>
<dbReference type="Proteomes" id="UP000006904">
    <property type="component" value="Chromosome"/>
</dbReference>
<dbReference type="GO" id="GO:0005829">
    <property type="term" value="C:cytosol"/>
    <property type="evidence" value="ECO:0007669"/>
    <property type="project" value="TreeGrafter"/>
</dbReference>
<dbReference type="GO" id="GO:0008837">
    <property type="term" value="F:diaminopimelate epimerase activity"/>
    <property type="evidence" value="ECO:0007669"/>
    <property type="project" value="UniProtKB-UniRule"/>
</dbReference>
<dbReference type="GO" id="GO:0009089">
    <property type="term" value="P:lysine biosynthetic process via diaminopimelate"/>
    <property type="evidence" value="ECO:0007669"/>
    <property type="project" value="UniProtKB-UniRule"/>
</dbReference>
<dbReference type="FunFam" id="3.10.310.10:FF:000001">
    <property type="entry name" value="Diaminopimelate epimerase"/>
    <property type="match status" value="1"/>
</dbReference>
<dbReference type="Gene3D" id="3.10.310.10">
    <property type="entry name" value="Diaminopimelate Epimerase, Chain A, domain 1"/>
    <property type="match status" value="2"/>
</dbReference>
<dbReference type="HAMAP" id="MF_00197">
    <property type="entry name" value="DAP_epimerase"/>
    <property type="match status" value="1"/>
</dbReference>
<dbReference type="InterPro" id="IPR018510">
    <property type="entry name" value="DAP_epimerase_AS"/>
</dbReference>
<dbReference type="InterPro" id="IPR001653">
    <property type="entry name" value="DAP_epimerase_DapF"/>
</dbReference>
<dbReference type="NCBIfam" id="TIGR00652">
    <property type="entry name" value="DapF"/>
    <property type="match status" value="1"/>
</dbReference>
<dbReference type="PANTHER" id="PTHR31689:SF0">
    <property type="entry name" value="DIAMINOPIMELATE EPIMERASE"/>
    <property type="match status" value="1"/>
</dbReference>
<dbReference type="PANTHER" id="PTHR31689">
    <property type="entry name" value="DIAMINOPIMELATE EPIMERASE, CHLOROPLASTIC"/>
    <property type="match status" value="1"/>
</dbReference>
<dbReference type="Pfam" id="PF01678">
    <property type="entry name" value="DAP_epimerase"/>
    <property type="match status" value="2"/>
</dbReference>
<dbReference type="SUPFAM" id="SSF54506">
    <property type="entry name" value="Diaminopimelate epimerase-like"/>
    <property type="match status" value="2"/>
</dbReference>
<dbReference type="PROSITE" id="PS01326">
    <property type="entry name" value="DAP_EPIMERASE"/>
    <property type="match status" value="1"/>
</dbReference>
<reference key="1">
    <citation type="journal article" date="2009" name="Science">
        <title>The dynamics and time scale of ongoing genomic erosion in symbiotic bacteria.</title>
        <authorList>
            <person name="Moran N.A."/>
            <person name="McLaughlin H.J."/>
            <person name="Sorek R."/>
        </authorList>
    </citation>
    <scope>NUCLEOTIDE SEQUENCE [LARGE SCALE GENOMIC DNA]</scope>
    <source>
        <strain>5A</strain>
    </source>
</reference>
<organism>
    <name type="scientific">Buchnera aphidicola subsp. Acyrthosiphon pisum (strain 5A)</name>
    <dbReference type="NCBI Taxonomy" id="563178"/>
    <lineage>
        <taxon>Bacteria</taxon>
        <taxon>Pseudomonadati</taxon>
        <taxon>Pseudomonadota</taxon>
        <taxon>Gammaproteobacteria</taxon>
        <taxon>Enterobacterales</taxon>
        <taxon>Erwiniaceae</taxon>
        <taxon>Buchnera</taxon>
    </lineage>
</organism>
<evidence type="ECO:0000255" key="1">
    <source>
        <dbReference type="HAMAP-Rule" id="MF_00197"/>
    </source>
</evidence>
<comment type="function">
    <text evidence="1">Catalyzes the stereoinversion of LL-2,6-diaminopimelate (L,L-DAP) to meso-diaminopimelate (meso-DAP), a precursor of L-lysine and an essential component of the bacterial peptidoglycan.</text>
</comment>
<comment type="catalytic activity">
    <reaction evidence="1">
        <text>(2S,6S)-2,6-diaminopimelate = meso-2,6-diaminopimelate</text>
        <dbReference type="Rhea" id="RHEA:15393"/>
        <dbReference type="ChEBI" id="CHEBI:57609"/>
        <dbReference type="ChEBI" id="CHEBI:57791"/>
        <dbReference type="EC" id="5.1.1.7"/>
    </reaction>
</comment>
<comment type="pathway">
    <text evidence="1">Amino-acid biosynthesis; L-lysine biosynthesis via DAP pathway; DL-2,6-diaminopimelate from LL-2,6-diaminopimelate: step 1/1.</text>
</comment>
<comment type="subunit">
    <text evidence="1">Homodimer.</text>
</comment>
<comment type="subcellular location">
    <subcellularLocation>
        <location evidence="1">Cytoplasm</location>
    </subcellularLocation>
</comment>
<comment type="similarity">
    <text evidence="1">Belongs to the diaminopimelate epimerase family.</text>
</comment>
<name>DAPF_BUCA5</name>
<feature type="chain" id="PRO_1000124403" description="Diaminopimelate epimerase">
    <location>
        <begin position="1"/>
        <end position="284"/>
    </location>
</feature>
<feature type="active site" description="Proton donor" evidence="1">
    <location>
        <position position="83"/>
    </location>
</feature>
<feature type="active site" description="Proton acceptor" evidence="1">
    <location>
        <position position="227"/>
    </location>
</feature>
<feature type="binding site" evidence="1">
    <location>
        <position position="21"/>
    </location>
    <ligand>
        <name>substrate</name>
    </ligand>
</feature>
<feature type="binding site" evidence="1">
    <location>
        <position position="54"/>
    </location>
    <ligand>
        <name>substrate</name>
    </ligand>
</feature>
<feature type="binding site" evidence="1">
    <location>
        <position position="74"/>
    </location>
    <ligand>
        <name>substrate</name>
    </ligand>
</feature>
<feature type="binding site" evidence="1">
    <location>
        <begin position="84"/>
        <end position="85"/>
    </location>
    <ligand>
        <name>substrate</name>
    </ligand>
</feature>
<feature type="binding site" evidence="1">
    <location>
        <position position="167"/>
    </location>
    <ligand>
        <name>substrate</name>
    </ligand>
</feature>
<feature type="binding site" evidence="1">
    <location>
        <position position="200"/>
    </location>
    <ligand>
        <name>substrate</name>
    </ligand>
</feature>
<feature type="binding site" evidence="1">
    <location>
        <begin position="218"/>
        <end position="219"/>
    </location>
    <ligand>
        <name>substrate</name>
    </ligand>
</feature>
<feature type="binding site" evidence="1">
    <location>
        <begin position="228"/>
        <end position="229"/>
    </location>
    <ligand>
        <name>substrate</name>
    </ligand>
</feature>
<feature type="site" description="Could be important to modulate the pK values of the two catalytic cysteine residues" evidence="1">
    <location>
        <position position="169"/>
    </location>
</feature>
<feature type="site" description="Could be important to modulate the pK values of the two catalytic cysteine residues" evidence="1">
    <location>
        <position position="218"/>
    </location>
</feature>
<feature type="site" description="Important for dimerization" evidence="1">
    <location>
        <position position="278"/>
    </location>
</feature>
<keyword id="KW-0028">Amino-acid biosynthesis</keyword>
<keyword id="KW-0963">Cytoplasm</keyword>
<keyword id="KW-0413">Isomerase</keyword>
<keyword id="KW-0457">Lysine biosynthesis</keyword>
<gene>
    <name evidence="1" type="primary">dapF</name>
    <name type="ordered locus">BUAP5A_582</name>
</gene>
<proteinExistence type="inferred from homology"/>
<protein>
    <recommendedName>
        <fullName evidence="1">Diaminopimelate epimerase</fullName>
        <shortName evidence="1">DAP epimerase</shortName>
        <ecNumber evidence="1">5.1.1.7</ecNumber>
    </recommendedName>
    <alternativeName>
        <fullName evidence="1">PLP-independent amino acid racemase</fullName>
    </alternativeName>
</protein>
<sequence length="284" mass="31995">MDSYYKNKKKINFSKMHGLKNDFMVINCIKKNVFLTSHIIKKLSNRYTGIGFDQLLLVEKSNSLLTDFHYRIFNANGNEVEQCGNGARCFGLFLLLKGLTNKKKILISTKKKPLTIEFLTENMIKVNMNEPDFKFYNLSSLQNVLDNNFSIKLINENLICNLVSIGNPHCIIKVQSIKNAPVNIIGDNIEKNPIFPEGVNVSFMEILNKKHIKLRVYERNVGETKACGSAACAAVAVGIAQKLLSDTVHVELLGGKLIIIWKGFGTPLYMVGPAKHVYDGYIYI</sequence>
<accession>B8D8F1</accession>